<evidence type="ECO:0000250" key="1">
    <source>
        <dbReference type="UniProtKB" id="Q9N0L8"/>
    </source>
</evidence>
<evidence type="ECO:0000255" key="2"/>
<evidence type="ECO:0000255" key="3">
    <source>
        <dbReference type="PROSITE-ProRule" id="PRU00722"/>
    </source>
</evidence>
<evidence type="ECO:0000256" key="4">
    <source>
        <dbReference type="SAM" id="MobiDB-lite"/>
    </source>
</evidence>
<evidence type="ECO:0000269" key="5">
    <source>
    </source>
</evidence>
<evidence type="ECO:0000269" key="6">
    <source ref="1"/>
</evidence>
<evidence type="ECO:0000305" key="7"/>
<feature type="signal peptide" evidence="2">
    <location>
        <begin position="1"/>
        <end position="19"/>
    </location>
</feature>
<feature type="chain" id="PRO_0000415260" description="Perlwapin-like protein" evidence="2">
    <location>
        <begin position="20"/>
        <end position="225"/>
    </location>
</feature>
<feature type="domain" description="WAP 1; atypical" evidence="3">
    <location>
        <begin position="27"/>
        <end position="68"/>
    </location>
</feature>
<feature type="domain" description="WAP 2" evidence="3">
    <location>
        <begin position="117"/>
        <end position="169"/>
    </location>
</feature>
<feature type="region of interest" description="Disordered" evidence="4">
    <location>
        <begin position="176"/>
        <end position="225"/>
    </location>
</feature>
<feature type="compositionally biased region" description="Low complexity" evidence="4">
    <location>
        <begin position="188"/>
        <end position="201"/>
    </location>
</feature>
<feature type="compositionally biased region" description="Pro residues" evidence="4">
    <location>
        <begin position="203"/>
        <end position="212"/>
    </location>
</feature>
<feature type="compositionally biased region" description="Polar residues" evidence="4">
    <location>
        <begin position="213"/>
        <end position="225"/>
    </location>
</feature>
<feature type="glycosylation site" description="N-linked (GlcNAc...) asparagine" evidence="2">
    <location>
        <position position="67"/>
    </location>
</feature>
<feature type="glycosylation site" description="N-linked (GlcNAc...) asparagine" evidence="2">
    <location>
        <position position="170"/>
    </location>
</feature>
<feature type="disulfide bond" evidence="1 3">
    <location>
        <begin position="27"/>
        <end position="57"/>
    </location>
</feature>
<feature type="disulfide bond" evidence="1 3">
    <location>
        <begin position="36"/>
        <end position="61"/>
    </location>
</feature>
<feature type="disulfide bond" evidence="1 3">
    <location>
        <begin position="43"/>
        <end position="56"/>
    </location>
</feature>
<feature type="disulfide bond" evidence="1 3">
    <location>
        <begin position="49"/>
        <end position="65"/>
    </location>
</feature>
<feature type="disulfide bond" evidence="1 3">
    <location>
        <begin position="125"/>
        <end position="157"/>
    </location>
</feature>
<feature type="disulfide bond" evidence="1 3">
    <location>
        <begin position="135"/>
        <end position="161"/>
    </location>
</feature>
<feature type="disulfide bond" evidence="1 3">
    <location>
        <begin position="143"/>
        <end position="156"/>
    </location>
</feature>
<feature type="disulfide bond" evidence="1 3">
    <location>
        <begin position="149"/>
        <end position="165"/>
    </location>
</feature>
<feature type="non-terminal residue" evidence="7">
    <location>
        <position position="225"/>
    </location>
</feature>
<accession>B3A0S1</accession>
<organism>
    <name type="scientific">Lottia gigantea</name>
    <name type="common">Giant owl limpet</name>
    <dbReference type="NCBI Taxonomy" id="225164"/>
    <lineage>
        <taxon>Eukaryota</taxon>
        <taxon>Metazoa</taxon>
        <taxon>Spiralia</taxon>
        <taxon>Lophotrochozoa</taxon>
        <taxon>Mollusca</taxon>
        <taxon>Gastropoda</taxon>
        <taxon>Patellogastropoda</taxon>
        <taxon>Lottioidea</taxon>
        <taxon>Lottiidae</taxon>
        <taxon>Lottia</taxon>
    </lineage>
</organism>
<keyword id="KW-0903">Direct protein sequencing</keyword>
<keyword id="KW-1015">Disulfide bond</keyword>
<keyword id="KW-0325">Glycoprotein</keyword>
<keyword id="KW-0677">Repeat</keyword>
<keyword id="KW-0964">Secreted</keyword>
<keyword id="KW-0732">Signal</keyword>
<reference evidence="7" key="1">
    <citation type="submission" date="2007-12" db="EMBL/GenBank/DDBJ databases">
        <title>DOE Joint Genome Institute Lottia gigantea EST project.</title>
        <authorList>
            <person name="Richardson P."/>
            <person name="Lucas S."/>
            <person name="Rokhsar D."/>
            <person name="Wang M."/>
            <person name="Lindquist E.A."/>
        </authorList>
    </citation>
    <scope>NUCLEOTIDE SEQUENCE [LARGE SCALE MRNA]</scope>
    <scope>IDENTIFICATION</scope>
    <source>
        <tissue evidence="6">Mantle</tissue>
    </source>
</reference>
<reference key="2">
    <citation type="journal article" date="2013" name="FEBS J.">
        <title>The shell-forming proteome of Lottia gigantea reveals both deep conservations and lineage-specific novelties.</title>
        <authorList>
            <person name="Marie B."/>
            <person name="Jackson D.J."/>
            <person name="Ramos-Silva P."/>
            <person name="Zanella-Cleon I."/>
            <person name="Guichard N."/>
            <person name="Marin F."/>
        </authorList>
    </citation>
    <scope>PROTEIN SEQUENCE OF 117-131</scope>
    <scope>SUBCELLULAR LOCATION</scope>
    <scope>TISSUE SPECIFICITY</scope>
    <source>
        <tissue>Shell</tissue>
    </source>
</reference>
<protein>
    <recommendedName>
        <fullName>Perlwapin-like protein</fullName>
    </recommendedName>
</protein>
<comment type="subcellular location">
    <subcellularLocation>
        <location evidence="5">Secreted</location>
    </subcellularLocation>
</comment>
<comment type="tissue specificity">
    <text evidence="5">Component of the acid-soluble organic matrix of calcified layers of the shell (at protein level).</text>
</comment>
<sequence length="225" mass="24775">MNHLWLFIVTVSCIYLVYGQGEESVPCKVKFMGTACPLGRLVCEEDGDCLGVNQVCCYDGCGTTCHNKTTTLIPSTTQPQIQPIIPSTQPQIQPIIPSTQPQIQPFIPSTQPQIQRIIPSPELLCPVVTVRYAFCRFSTYTPCHTSNDCAVPGMKCCPDVCGKRCKFPINSTDHQQFQQTPLKPTVPLPQYQQTPLQPTVPSSQPPLQPTVPSPQSYNYKGACST</sequence>
<dbReference type="EMBL" id="FC634663">
    <property type="status" value="NOT_ANNOTATED_CDS"/>
    <property type="molecule type" value="mRNA"/>
</dbReference>
<dbReference type="GO" id="GO:0005576">
    <property type="term" value="C:extracellular region"/>
    <property type="evidence" value="ECO:0007669"/>
    <property type="project" value="UniProtKB-SubCell"/>
</dbReference>
<dbReference type="GO" id="GO:0030414">
    <property type="term" value="F:peptidase inhibitor activity"/>
    <property type="evidence" value="ECO:0007669"/>
    <property type="project" value="InterPro"/>
</dbReference>
<dbReference type="InterPro" id="IPR008197">
    <property type="entry name" value="WAP_dom"/>
</dbReference>
<dbReference type="Pfam" id="PF00095">
    <property type="entry name" value="WAP"/>
    <property type="match status" value="1"/>
</dbReference>
<dbReference type="PROSITE" id="PS51390">
    <property type="entry name" value="WAP"/>
    <property type="match status" value="2"/>
</dbReference>
<name>PWAPL_LOTGI</name>
<proteinExistence type="evidence at protein level"/>